<evidence type="ECO:0000250" key="1"/>
<evidence type="ECO:0000305" key="2"/>
<protein>
    <recommendedName>
        <fullName>3-isopropylmalate dehydrogenase</fullName>
        <shortName>3-IPM-DH</shortName>
        <shortName>IMDH</shortName>
        <ecNumber>1.1.1.85</ecNumber>
    </recommendedName>
    <alternativeName>
        <fullName>Beta-IPM dehydrogenase</fullName>
    </alternativeName>
</protein>
<comment type="function">
    <text>Catalyzes the oxidation of 3-carboxy-2-hydroxy-4-methylpentanoate (3-isopropylmalate) to 3-carboxy-4-methyl-2-oxopentanoate. The product decarboxylates to 4-methyl-2 oxopentanoate.</text>
</comment>
<comment type="catalytic activity">
    <reaction>
        <text>(2R,3S)-3-isopropylmalate + NAD(+) = 4-methyl-2-oxopentanoate + CO2 + NADH</text>
        <dbReference type="Rhea" id="RHEA:32271"/>
        <dbReference type="ChEBI" id="CHEBI:16526"/>
        <dbReference type="ChEBI" id="CHEBI:17865"/>
        <dbReference type="ChEBI" id="CHEBI:35121"/>
        <dbReference type="ChEBI" id="CHEBI:57540"/>
        <dbReference type="ChEBI" id="CHEBI:57945"/>
        <dbReference type="EC" id="1.1.1.85"/>
    </reaction>
</comment>
<comment type="cofactor">
    <cofactor evidence="1">
        <name>Mg(2+)</name>
        <dbReference type="ChEBI" id="CHEBI:18420"/>
    </cofactor>
    <cofactor evidence="1">
        <name>Mn(2+)</name>
        <dbReference type="ChEBI" id="CHEBI:29035"/>
    </cofactor>
    <text evidence="1">Binds 1 Mg(2+) or Mn(2+) ion per subunit.</text>
</comment>
<comment type="pathway">
    <text>Amino-acid biosynthesis; L-leucine biosynthesis; L-leucine from 3-methyl-2-oxobutanoate: step 3/4.</text>
</comment>
<comment type="subunit">
    <text evidence="1">Homodimer.</text>
</comment>
<comment type="subcellular location">
    <subcellularLocation>
        <location>Cytoplasm</location>
    </subcellularLocation>
</comment>
<comment type="similarity">
    <text evidence="2">Belongs to the isocitrate and isopropylmalate dehydrogenases family.</text>
</comment>
<gene>
    <name type="primary">LEU2</name>
    <name type="ordered locus">CAGL0H03795g</name>
</gene>
<accession>O14429</accession>
<accession>Q6FS35</accession>
<proteinExistence type="inferred from homology"/>
<organism>
    <name type="scientific">Candida glabrata (strain ATCC 2001 / BCRC 20586 / JCM 3761 / NBRC 0622 / NRRL Y-65 / CBS 138)</name>
    <name type="common">Yeast</name>
    <name type="synonym">Nakaseomyces glabratus</name>
    <dbReference type="NCBI Taxonomy" id="284593"/>
    <lineage>
        <taxon>Eukaryota</taxon>
        <taxon>Fungi</taxon>
        <taxon>Dikarya</taxon>
        <taxon>Ascomycota</taxon>
        <taxon>Saccharomycotina</taxon>
        <taxon>Saccharomycetes</taxon>
        <taxon>Saccharomycetales</taxon>
        <taxon>Saccharomycetaceae</taxon>
        <taxon>Nakaseomyces</taxon>
    </lineage>
</organism>
<dbReference type="EC" id="1.1.1.85"/>
<dbReference type="EMBL" id="U90626">
    <property type="protein sequence ID" value="AAB62089.1"/>
    <property type="molecule type" value="Genomic_DNA"/>
</dbReference>
<dbReference type="EMBL" id="CR380954">
    <property type="protein sequence ID" value="CAG59892.1"/>
    <property type="molecule type" value="Genomic_DNA"/>
</dbReference>
<dbReference type="RefSeq" id="XP_446959.1">
    <property type="nucleotide sequence ID" value="XM_446959.1"/>
</dbReference>
<dbReference type="SMR" id="O14429"/>
<dbReference type="FunCoup" id="O14429">
    <property type="interactions" value="1012"/>
</dbReference>
<dbReference type="STRING" id="284593.O14429"/>
<dbReference type="EnsemblFungi" id="CAGL0H03795g-T">
    <property type="protein sequence ID" value="CAGL0H03795g-T-p1"/>
    <property type="gene ID" value="CAGL0H03795g"/>
</dbReference>
<dbReference type="GeneID" id="2888798"/>
<dbReference type="KEGG" id="cgr:2888798"/>
<dbReference type="CGD" id="CAL0131550">
    <property type="gene designation" value="LEU2"/>
</dbReference>
<dbReference type="VEuPathDB" id="FungiDB:CAGL0H03795g"/>
<dbReference type="eggNOG" id="KOG0786">
    <property type="taxonomic scope" value="Eukaryota"/>
</dbReference>
<dbReference type="HOGENOM" id="CLU_031953_0_3_1"/>
<dbReference type="InParanoid" id="O14429"/>
<dbReference type="OMA" id="EYDLGAR"/>
<dbReference type="UniPathway" id="UPA00048">
    <property type="reaction ID" value="UER00072"/>
</dbReference>
<dbReference type="Proteomes" id="UP000002428">
    <property type="component" value="Chromosome H"/>
</dbReference>
<dbReference type="GO" id="GO:0005829">
    <property type="term" value="C:cytosol"/>
    <property type="evidence" value="ECO:0007669"/>
    <property type="project" value="EnsemblFungi"/>
</dbReference>
<dbReference type="GO" id="GO:0003862">
    <property type="term" value="F:3-isopropylmalate dehydrogenase activity"/>
    <property type="evidence" value="ECO:0007669"/>
    <property type="project" value="UniProtKB-EC"/>
</dbReference>
<dbReference type="GO" id="GO:0000287">
    <property type="term" value="F:magnesium ion binding"/>
    <property type="evidence" value="ECO:0007669"/>
    <property type="project" value="InterPro"/>
</dbReference>
<dbReference type="GO" id="GO:0051287">
    <property type="term" value="F:NAD binding"/>
    <property type="evidence" value="ECO:0007669"/>
    <property type="project" value="InterPro"/>
</dbReference>
<dbReference type="GO" id="GO:0006097">
    <property type="term" value="P:glyoxylate cycle"/>
    <property type="evidence" value="ECO:0007669"/>
    <property type="project" value="EnsemblFungi"/>
</dbReference>
<dbReference type="GO" id="GO:0009098">
    <property type="term" value="P:L-leucine biosynthetic process"/>
    <property type="evidence" value="ECO:0007669"/>
    <property type="project" value="UniProtKB-UniPathway"/>
</dbReference>
<dbReference type="FunFam" id="3.40.718.10:FF:000006">
    <property type="entry name" value="3-isopropylmalate dehydrogenase"/>
    <property type="match status" value="1"/>
</dbReference>
<dbReference type="Gene3D" id="3.40.718.10">
    <property type="entry name" value="Isopropylmalate Dehydrogenase"/>
    <property type="match status" value="1"/>
</dbReference>
<dbReference type="InterPro" id="IPR019818">
    <property type="entry name" value="IsoCit/isopropylmalate_DH_CS"/>
</dbReference>
<dbReference type="InterPro" id="IPR024084">
    <property type="entry name" value="IsoPropMal-DH-like_dom"/>
</dbReference>
<dbReference type="InterPro" id="IPR004429">
    <property type="entry name" value="Isopropylmalate_DH"/>
</dbReference>
<dbReference type="NCBIfam" id="TIGR00169">
    <property type="entry name" value="leuB"/>
    <property type="match status" value="1"/>
</dbReference>
<dbReference type="PANTHER" id="PTHR42979">
    <property type="entry name" value="3-ISOPROPYLMALATE DEHYDROGENASE"/>
    <property type="match status" value="1"/>
</dbReference>
<dbReference type="PANTHER" id="PTHR42979:SF1">
    <property type="entry name" value="3-ISOPROPYLMALATE DEHYDROGENASE"/>
    <property type="match status" value="1"/>
</dbReference>
<dbReference type="Pfam" id="PF00180">
    <property type="entry name" value="Iso_dh"/>
    <property type="match status" value="1"/>
</dbReference>
<dbReference type="SMART" id="SM01329">
    <property type="entry name" value="Iso_dh"/>
    <property type="match status" value="1"/>
</dbReference>
<dbReference type="SUPFAM" id="SSF53659">
    <property type="entry name" value="Isocitrate/Isopropylmalate dehydrogenase-like"/>
    <property type="match status" value="1"/>
</dbReference>
<dbReference type="PROSITE" id="PS00470">
    <property type="entry name" value="IDH_IMDH"/>
    <property type="match status" value="1"/>
</dbReference>
<feature type="chain" id="PRO_0000083603" description="3-isopropylmalate dehydrogenase">
    <location>
        <begin position="1"/>
        <end position="365"/>
    </location>
</feature>
<feature type="binding site" evidence="1">
    <location>
        <begin position="80"/>
        <end position="91"/>
    </location>
    <ligand>
        <name>NAD(+)</name>
        <dbReference type="ChEBI" id="CHEBI:57540"/>
    </ligand>
</feature>
<feature type="binding site" evidence="1">
    <location>
        <position position="98"/>
    </location>
    <ligand>
        <name>substrate</name>
    </ligand>
</feature>
<feature type="binding site" evidence="1">
    <location>
        <position position="108"/>
    </location>
    <ligand>
        <name>substrate</name>
    </ligand>
</feature>
<feature type="binding site" evidence="1">
    <location>
        <position position="137"/>
    </location>
    <ligand>
        <name>substrate</name>
    </ligand>
</feature>
<feature type="binding site" evidence="1">
    <location>
        <position position="226"/>
    </location>
    <ligand>
        <name>Mg(2+)</name>
        <dbReference type="ChEBI" id="CHEBI:18420"/>
    </ligand>
</feature>
<feature type="binding site" evidence="1">
    <location>
        <position position="226"/>
    </location>
    <ligand>
        <name>substrate</name>
    </ligand>
</feature>
<feature type="binding site" evidence="1">
    <location>
        <position position="251"/>
    </location>
    <ligand>
        <name>Mg(2+)</name>
        <dbReference type="ChEBI" id="CHEBI:18420"/>
    </ligand>
</feature>
<feature type="binding site" evidence="1">
    <location>
        <position position="255"/>
    </location>
    <ligand>
        <name>Mg(2+)</name>
        <dbReference type="ChEBI" id="CHEBI:18420"/>
    </ligand>
</feature>
<feature type="binding site" evidence="1">
    <location>
        <begin position="290"/>
        <end position="301"/>
    </location>
    <ligand>
        <name>NAD(+)</name>
        <dbReference type="ChEBI" id="CHEBI:57540"/>
    </ligand>
</feature>
<feature type="site" description="Important for catalysis" evidence="1">
    <location>
        <position position="144"/>
    </location>
</feature>
<feature type="site" description="Important for catalysis" evidence="1">
    <location>
        <position position="193"/>
    </location>
</feature>
<feature type="sequence conflict" description="In Ref. 1; AAB62089." evidence="2" ref="1">
    <original>L</original>
    <variation>P</variation>
    <location>
        <position position="10"/>
    </location>
</feature>
<feature type="sequence conflict" description="In Ref. 1; AAB62089." evidence="2" ref="1">
    <original>I</original>
    <variation>N</variation>
    <location>
        <position position="24"/>
    </location>
</feature>
<feature type="sequence conflict" description="In Ref. 1; AAB62089." evidence="2" ref="1">
    <original>A</original>
    <variation>P</variation>
    <location>
        <position position="51"/>
    </location>
</feature>
<reference key="1">
    <citation type="submission" date="1997-08" db="EMBL/GenBank/DDBJ databases">
        <authorList>
            <person name="Kitada K."/>
        </authorList>
    </citation>
    <scope>NUCLEOTIDE SEQUENCE [GENOMIC DNA]</scope>
    <source>
        <strain>ATCC 2001 / BCRC 20586 / JCM 3761 / NBRC 0622 / NRRL Y-65 / CBS 138</strain>
    </source>
</reference>
<reference key="2">
    <citation type="journal article" date="2004" name="Nature">
        <title>Genome evolution in yeasts.</title>
        <authorList>
            <person name="Dujon B."/>
            <person name="Sherman D."/>
            <person name="Fischer G."/>
            <person name="Durrens P."/>
            <person name="Casaregola S."/>
            <person name="Lafontaine I."/>
            <person name="de Montigny J."/>
            <person name="Marck C."/>
            <person name="Neuveglise C."/>
            <person name="Talla E."/>
            <person name="Goffard N."/>
            <person name="Frangeul L."/>
            <person name="Aigle M."/>
            <person name="Anthouard V."/>
            <person name="Babour A."/>
            <person name="Barbe V."/>
            <person name="Barnay S."/>
            <person name="Blanchin S."/>
            <person name="Beckerich J.-M."/>
            <person name="Beyne E."/>
            <person name="Bleykasten C."/>
            <person name="Boisrame A."/>
            <person name="Boyer J."/>
            <person name="Cattolico L."/>
            <person name="Confanioleri F."/>
            <person name="de Daruvar A."/>
            <person name="Despons L."/>
            <person name="Fabre E."/>
            <person name="Fairhead C."/>
            <person name="Ferry-Dumazet H."/>
            <person name="Groppi A."/>
            <person name="Hantraye F."/>
            <person name="Hennequin C."/>
            <person name="Jauniaux N."/>
            <person name="Joyet P."/>
            <person name="Kachouri R."/>
            <person name="Kerrest A."/>
            <person name="Koszul R."/>
            <person name="Lemaire M."/>
            <person name="Lesur I."/>
            <person name="Ma L."/>
            <person name="Muller H."/>
            <person name="Nicaud J.-M."/>
            <person name="Nikolski M."/>
            <person name="Oztas S."/>
            <person name="Ozier-Kalogeropoulos O."/>
            <person name="Pellenz S."/>
            <person name="Potier S."/>
            <person name="Richard G.-F."/>
            <person name="Straub M.-L."/>
            <person name="Suleau A."/>
            <person name="Swennen D."/>
            <person name="Tekaia F."/>
            <person name="Wesolowski-Louvel M."/>
            <person name="Westhof E."/>
            <person name="Wirth B."/>
            <person name="Zeniou-Meyer M."/>
            <person name="Zivanovic Y."/>
            <person name="Bolotin-Fukuhara M."/>
            <person name="Thierry A."/>
            <person name="Bouchier C."/>
            <person name="Caudron B."/>
            <person name="Scarpelli C."/>
            <person name="Gaillardin C."/>
            <person name="Weissenbach J."/>
            <person name="Wincker P."/>
            <person name="Souciet J.-L."/>
        </authorList>
    </citation>
    <scope>NUCLEOTIDE SEQUENCE [LARGE SCALE GENOMIC DNA]</scope>
    <source>
        <strain>ATCC 2001 / BCRC 20586 / JCM 3761 / NBRC 0622 / NRRL Y-65 / CBS 138</strain>
    </source>
</reference>
<sequence>MAVTKTIVVLPGDHVGQEITEEAIKVLNAIQECRPDKVNFKFDHHLIGGAAIDATGVPLPDEALEASKKADAVLLGAVGGPKWGTGAVRPEQGLLKIRKELQLYANLRPCNFASDSLLDLSPLKPEIARGTDFVVVRELVGGIYFGERKEDEGDGVAWDSEKYSVPEVQRITRMAAFMALQHNPPLPIWSLDKANVLASSRLWRKTVEETIKNEFPQLTVQHQLIDSAAMILVKNPTHLNGIIITNNMFGDIISDEASVIPGSLGLLPSASLASLPDKNTAFGLYEPCHGSAPDLPKGKVNPVATILSAAMMLKLSLDLFEEGEIIEQAVKKVLDSGIRTADLKGTNSTTEVGDAVAKAVRELLA</sequence>
<name>LEU3_CANGA</name>
<keyword id="KW-0028">Amino-acid biosynthesis</keyword>
<keyword id="KW-0100">Branched-chain amino acid biosynthesis</keyword>
<keyword id="KW-0963">Cytoplasm</keyword>
<keyword id="KW-0432">Leucine biosynthesis</keyword>
<keyword id="KW-0460">Magnesium</keyword>
<keyword id="KW-0464">Manganese</keyword>
<keyword id="KW-0479">Metal-binding</keyword>
<keyword id="KW-0520">NAD</keyword>
<keyword id="KW-0560">Oxidoreductase</keyword>
<keyword id="KW-1185">Reference proteome</keyword>